<sequence length="380" mass="42139">MLVDKLYALSLSHKRLSVDELSEISRNVHKTCYNVQAFVFHTCNRVEVYLYDADAGPAEHIKRSYGPYVEKVAEFRGVEAARHLFRVAAGLESMLIGETDVLGQLEEAYESQVRRGNLRGLLKTVVERAVAVGKRVRTETGISRGPRGLGSLSIVYLSRRLPLREISVCVIGAGAVGRGVVKELIDAGVRRVAVVNRTVEKAADLGVEVRPLTSENVEWCLREFDVVYTAVSSFEPVVVYVPPGSRVKLVVDLGVPRNTAPNLPVEVVTLDHLRELAEEFNRQRAEEVSKAEKIVEEEVARLEEVLRRRWVELEMSALLKKWFAVAEEEGERAGGGPARLAAMSTVKRTLLPLVNYIKEVAVKDLAVAEGLLQVLKSAYA</sequence>
<name>HEM11_PYRCJ</name>
<evidence type="ECO:0000255" key="1">
    <source>
        <dbReference type="HAMAP-Rule" id="MF_00087"/>
    </source>
</evidence>
<feature type="chain" id="PRO_0000335098" description="Glutamyl-tRNA reductase 1">
    <location>
        <begin position="1"/>
        <end position="380"/>
    </location>
</feature>
<feature type="active site" description="Nucleophile" evidence="1">
    <location>
        <position position="43"/>
    </location>
</feature>
<feature type="binding site" evidence="1">
    <location>
        <begin position="42"/>
        <end position="45"/>
    </location>
    <ligand>
        <name>substrate</name>
    </ligand>
</feature>
<feature type="binding site" evidence="1">
    <location>
        <position position="93"/>
    </location>
    <ligand>
        <name>substrate</name>
    </ligand>
</feature>
<feature type="binding site" evidence="1">
    <location>
        <begin position="98"/>
        <end position="100"/>
    </location>
    <ligand>
        <name>substrate</name>
    </ligand>
</feature>
<feature type="binding site" evidence="1">
    <location>
        <position position="104"/>
    </location>
    <ligand>
        <name>substrate</name>
    </ligand>
</feature>
<feature type="binding site" evidence="1">
    <location>
        <begin position="172"/>
        <end position="177"/>
    </location>
    <ligand>
        <name>NADP(+)</name>
        <dbReference type="ChEBI" id="CHEBI:58349"/>
    </ligand>
</feature>
<feature type="site" description="Important for activity" evidence="1">
    <location>
        <position position="83"/>
    </location>
</feature>
<comment type="function">
    <text evidence="1">Catalyzes the NADPH-dependent reduction of glutamyl-tRNA(Glu) to glutamate 1-semialdehyde (GSA).</text>
</comment>
<comment type="catalytic activity">
    <reaction evidence="1">
        <text>(S)-4-amino-5-oxopentanoate + tRNA(Glu) + NADP(+) = L-glutamyl-tRNA(Glu) + NADPH + H(+)</text>
        <dbReference type="Rhea" id="RHEA:12344"/>
        <dbReference type="Rhea" id="RHEA-COMP:9663"/>
        <dbReference type="Rhea" id="RHEA-COMP:9680"/>
        <dbReference type="ChEBI" id="CHEBI:15378"/>
        <dbReference type="ChEBI" id="CHEBI:57501"/>
        <dbReference type="ChEBI" id="CHEBI:57783"/>
        <dbReference type="ChEBI" id="CHEBI:58349"/>
        <dbReference type="ChEBI" id="CHEBI:78442"/>
        <dbReference type="ChEBI" id="CHEBI:78520"/>
        <dbReference type="EC" id="1.2.1.70"/>
    </reaction>
</comment>
<comment type="pathway">
    <text evidence="1">Porphyrin-containing compound metabolism; protoporphyrin-IX biosynthesis; 5-aminolevulinate from L-glutamyl-tRNA(Glu): step 1/2.</text>
</comment>
<comment type="subunit">
    <text evidence="1">Homodimer.</text>
</comment>
<comment type="domain">
    <text evidence="1">Possesses an unusual extended V-shaped dimeric structure with each monomer consisting of three distinct domains arranged along a curved 'spinal' alpha-helix. The N-terminal catalytic domain specifically recognizes the glutamate moiety of the substrate. The second domain is the NADPH-binding domain, and the third C-terminal domain is responsible for dimerization.</text>
</comment>
<comment type="miscellaneous">
    <text evidence="1">During catalysis, the active site Cys acts as a nucleophile attacking the alpha-carbonyl group of tRNA-bound glutamate with the formation of a thioester intermediate between enzyme and glutamate, and the concomitant release of tRNA(Glu). The thioester intermediate is finally reduced by direct hydride transfer from NADPH, to form the product GSA.</text>
</comment>
<comment type="similarity">
    <text evidence="1">Belongs to the glutamyl-tRNA reductase family.</text>
</comment>
<reference key="1">
    <citation type="submission" date="2007-02" db="EMBL/GenBank/DDBJ databases">
        <title>Complete sequence of Pyrobaculum calidifontis JCM 11548.</title>
        <authorList>
            <consortium name="US DOE Joint Genome Institute"/>
            <person name="Copeland A."/>
            <person name="Lucas S."/>
            <person name="Lapidus A."/>
            <person name="Barry K."/>
            <person name="Glavina del Rio T."/>
            <person name="Dalin E."/>
            <person name="Tice H."/>
            <person name="Pitluck S."/>
            <person name="Chain P."/>
            <person name="Malfatti S."/>
            <person name="Shin M."/>
            <person name="Vergez L."/>
            <person name="Schmutz J."/>
            <person name="Larimer F."/>
            <person name="Land M."/>
            <person name="Hauser L."/>
            <person name="Kyrpides N."/>
            <person name="Mikhailova N."/>
            <person name="Cozen A.E."/>
            <person name="Fitz-Gibbon S.T."/>
            <person name="House C.H."/>
            <person name="Saltikov C."/>
            <person name="Lowe T.M."/>
            <person name="Richardson P."/>
        </authorList>
    </citation>
    <scope>NUCLEOTIDE SEQUENCE [LARGE SCALE GENOMIC DNA]</scope>
    <source>
        <strain>DSM 21063 / JCM 11548 / VA1</strain>
    </source>
</reference>
<dbReference type="EC" id="1.2.1.70" evidence="1"/>
<dbReference type="EMBL" id="CP000561">
    <property type="protein sequence ID" value="ABO08900.1"/>
    <property type="molecule type" value="Genomic_DNA"/>
</dbReference>
<dbReference type="RefSeq" id="WP_011850158.1">
    <property type="nucleotide sequence ID" value="NC_009073.1"/>
</dbReference>
<dbReference type="SMR" id="A3MW83"/>
<dbReference type="STRING" id="410359.Pcal_1481"/>
<dbReference type="GeneID" id="4910204"/>
<dbReference type="KEGG" id="pcl:Pcal_1481"/>
<dbReference type="eggNOG" id="arCOG01036">
    <property type="taxonomic scope" value="Archaea"/>
</dbReference>
<dbReference type="HOGENOM" id="CLU_035113_0_0_2"/>
<dbReference type="OrthoDB" id="4562at2157"/>
<dbReference type="UniPathway" id="UPA00251">
    <property type="reaction ID" value="UER00316"/>
</dbReference>
<dbReference type="Proteomes" id="UP000001431">
    <property type="component" value="Chromosome"/>
</dbReference>
<dbReference type="GO" id="GO:0008883">
    <property type="term" value="F:glutamyl-tRNA reductase activity"/>
    <property type="evidence" value="ECO:0007669"/>
    <property type="project" value="UniProtKB-UniRule"/>
</dbReference>
<dbReference type="GO" id="GO:0050661">
    <property type="term" value="F:NADP binding"/>
    <property type="evidence" value="ECO:0007669"/>
    <property type="project" value="InterPro"/>
</dbReference>
<dbReference type="GO" id="GO:0019353">
    <property type="term" value="P:protoporphyrinogen IX biosynthetic process from glutamate"/>
    <property type="evidence" value="ECO:0007669"/>
    <property type="project" value="TreeGrafter"/>
</dbReference>
<dbReference type="Gene3D" id="3.30.460.30">
    <property type="entry name" value="Glutamyl-tRNA reductase, N-terminal domain"/>
    <property type="match status" value="1"/>
</dbReference>
<dbReference type="Gene3D" id="3.40.50.720">
    <property type="entry name" value="NAD(P)-binding Rossmann-like Domain"/>
    <property type="match status" value="1"/>
</dbReference>
<dbReference type="HAMAP" id="MF_00087">
    <property type="entry name" value="Glu_tRNA_reductase"/>
    <property type="match status" value="1"/>
</dbReference>
<dbReference type="InterPro" id="IPR000343">
    <property type="entry name" value="4pyrrol_synth_GluRdtase"/>
</dbReference>
<dbReference type="InterPro" id="IPR015895">
    <property type="entry name" value="4pyrrol_synth_GluRdtase_N"/>
</dbReference>
<dbReference type="InterPro" id="IPR018214">
    <property type="entry name" value="GluRdtase_CS"/>
</dbReference>
<dbReference type="InterPro" id="IPR036343">
    <property type="entry name" value="GluRdtase_N_sf"/>
</dbReference>
<dbReference type="InterPro" id="IPR036291">
    <property type="entry name" value="NAD(P)-bd_dom_sf"/>
</dbReference>
<dbReference type="InterPro" id="IPR006151">
    <property type="entry name" value="Shikm_DH/Glu-tRNA_Rdtase"/>
</dbReference>
<dbReference type="PANTHER" id="PTHR43013">
    <property type="entry name" value="GLUTAMYL-TRNA REDUCTASE"/>
    <property type="match status" value="1"/>
</dbReference>
<dbReference type="PANTHER" id="PTHR43013:SF1">
    <property type="entry name" value="GLUTAMYL-TRNA REDUCTASE"/>
    <property type="match status" value="1"/>
</dbReference>
<dbReference type="Pfam" id="PF05201">
    <property type="entry name" value="GlutR_N"/>
    <property type="match status" value="1"/>
</dbReference>
<dbReference type="Pfam" id="PF01488">
    <property type="entry name" value="Shikimate_DH"/>
    <property type="match status" value="1"/>
</dbReference>
<dbReference type="SUPFAM" id="SSF69742">
    <property type="entry name" value="Glutamyl tRNA-reductase catalytic, N-terminal domain"/>
    <property type="match status" value="1"/>
</dbReference>
<dbReference type="SUPFAM" id="SSF51735">
    <property type="entry name" value="NAD(P)-binding Rossmann-fold domains"/>
    <property type="match status" value="1"/>
</dbReference>
<dbReference type="PROSITE" id="PS00747">
    <property type="entry name" value="GLUTR"/>
    <property type="match status" value="1"/>
</dbReference>
<accession>A3MW83</accession>
<protein>
    <recommendedName>
        <fullName evidence="1">Glutamyl-tRNA reductase 1</fullName>
        <shortName evidence="1">GluTR 1</shortName>
        <ecNumber evidence="1">1.2.1.70</ecNumber>
    </recommendedName>
</protein>
<gene>
    <name evidence="1" type="primary">hemA1</name>
    <name type="ordered locus">Pcal_1481</name>
</gene>
<keyword id="KW-0521">NADP</keyword>
<keyword id="KW-0560">Oxidoreductase</keyword>
<keyword id="KW-0627">Porphyrin biosynthesis</keyword>
<organism>
    <name type="scientific">Pyrobaculum calidifontis (strain DSM 21063 / JCM 11548 / VA1)</name>
    <dbReference type="NCBI Taxonomy" id="410359"/>
    <lineage>
        <taxon>Archaea</taxon>
        <taxon>Thermoproteota</taxon>
        <taxon>Thermoprotei</taxon>
        <taxon>Thermoproteales</taxon>
        <taxon>Thermoproteaceae</taxon>
        <taxon>Pyrobaculum</taxon>
    </lineage>
</organism>
<proteinExistence type="inferred from homology"/>